<proteinExistence type="inferred from homology"/>
<keyword id="KW-1185">Reference proteome</keyword>
<organism>
    <name type="scientific">Equine herpesvirus 2 (strain 86/87)</name>
    <name type="common">EHV-2</name>
    <dbReference type="NCBI Taxonomy" id="82831"/>
    <lineage>
        <taxon>Viruses</taxon>
        <taxon>Duplodnaviria</taxon>
        <taxon>Heunggongvirae</taxon>
        <taxon>Peploviricota</taxon>
        <taxon>Herviviricetes</taxon>
        <taxon>Herpesvirales</taxon>
        <taxon>Orthoherpesviridae</taxon>
        <taxon>Gammaherpesvirinae</taxon>
        <taxon>Percavirus</taxon>
        <taxon>Percavirus equidgamma2</taxon>
        <taxon>Equid gammaherpesvirus 2</taxon>
    </lineage>
</organism>
<organismHost>
    <name type="scientific">Equus caballus</name>
    <name type="common">Horse</name>
    <dbReference type="NCBI Taxonomy" id="9796"/>
</organismHost>
<sequence length="768" mass="85468">MASPSSLLFGEAVILPVYDLDAQQQQRCAKGGRMEARELLSLQIDIFSCLALNRSLGGVTANLDALDAALRPEPIFYTCRAVRRLLLGACWYPVVVENEEGEGEGEREVDEAAAKEEPGNNRIGTVPGEAYEGAGLIITSDGMYINKKIQTHSYLHTIYSLESTDNAREEWRCRARAVFCHSLSLTLINPQLMFRIISRYLSINQFEECFSSFVEGVARDRALRATCTRNYFALLGHLKSPAPPLYSPPASSARAHELHAHGVLSFVADWPDLEALAPLRAKIAENLVAFPQTLASLCALPYCREVSLEAEGFHENQALVSMAMPYLKVAVYKKDPGARPGRVVAREGGGVERWYVYPPRMAVYRITMCLAAMGPGARHVPSEAPRPSSEGPGLPHALVSLLNRGKYAPRETRATMTLPLGLREGALFEPGERRRPLADSFAPVSSLSVHGFGINVFNTNMVINTKIACDPRGARYRTVMDIPRLTNNFVIRKYSVKEPSFTVSVFYSDAACASGTAINMNISGDYLSFLYAVGNLKCFMPVRTVFPISVANWNSTLDLQGLENQQLVRRGRSDVFWTTNFPSAVSTQRGSNVSWFKAATATISKVHGPGLVARVYSETAPILTNPRARLNLVKNAIFSTVETRNKAQIQTIHKRFLECLYECASFGRLDVRAVLRLARGGYFDFSKRIISHTKNKHECAVLGYKKCNLIPKILCDKKKVRLDELGRNANFMTFLSSVAHRNRKLKNRMLRHISRTMGLSWKLHLHKN</sequence>
<reference key="1">
    <citation type="journal article" date="1995" name="J. Mol. Biol.">
        <title>The DNA sequence of equine herpesvirus 2.</title>
        <authorList>
            <person name="Telford E.A.R."/>
            <person name="Watson M.S."/>
            <person name="Aird H.C."/>
            <person name="Perry J."/>
            <person name="Davison A.J."/>
        </authorList>
    </citation>
    <scope>NUCLEOTIDE SEQUENCE [LARGE SCALE GENOMIC DNA]</scope>
</reference>
<reference key="2">
    <citation type="submission" date="2015-01" db="EMBL/GenBank/DDBJ databases">
        <authorList>
            <person name="Davison A.J."/>
        </authorList>
    </citation>
    <scope>SEQUENCE REVISION</scope>
</reference>
<dbReference type="EMBL" id="U20824">
    <property type="protein sequence ID" value="AAC13811.2"/>
    <property type="molecule type" value="Genomic_DNA"/>
</dbReference>
<dbReference type="PIR" id="S55618">
    <property type="entry name" value="S55618"/>
</dbReference>
<dbReference type="KEGG" id="vg:1461082"/>
<dbReference type="Proteomes" id="UP000007083">
    <property type="component" value="Segment"/>
</dbReference>
<dbReference type="InterPro" id="IPR004285">
    <property type="entry name" value="Herpes_UL87_C"/>
</dbReference>
<dbReference type="Pfam" id="PF03043">
    <property type="entry name" value="Herpes_UL87"/>
    <property type="match status" value="1"/>
</dbReference>
<protein>
    <recommendedName>
        <fullName>Gene 24 protein</fullName>
    </recommendedName>
</protein>
<gene>
    <name type="primary">24</name>
</gene>
<name>UL87_EHV2</name>
<accession>Q66627</accession>
<evidence type="ECO:0000256" key="1">
    <source>
        <dbReference type="SAM" id="MobiDB-lite"/>
    </source>
</evidence>
<evidence type="ECO:0000305" key="2"/>
<feature type="chain" id="PRO_0000406069" description="Gene 24 protein">
    <location>
        <begin position="1"/>
        <end position="768"/>
    </location>
</feature>
<feature type="region of interest" description="Disordered" evidence="1">
    <location>
        <begin position="102"/>
        <end position="125"/>
    </location>
</feature>
<feature type="compositionally biased region" description="Basic and acidic residues" evidence="1">
    <location>
        <begin position="104"/>
        <end position="119"/>
    </location>
</feature>
<comment type="similarity">
    <text evidence="2">Belongs to the herpesviridae UL87 family.</text>
</comment>